<proteinExistence type="evidence at protein level"/>
<evidence type="ECO:0000250" key="1">
    <source>
        <dbReference type="UniProtKB" id="A0A3Q1N1R0"/>
    </source>
</evidence>
<evidence type="ECO:0000255" key="2">
    <source>
        <dbReference type="PROSITE-ProRule" id="PRU00665"/>
    </source>
</evidence>
<evidence type="ECO:0000269" key="3">
    <source>
    </source>
</evidence>
<evidence type="ECO:0000269" key="4">
    <source>
    </source>
</evidence>
<evidence type="ECO:0000269" key="5">
    <source>
    </source>
</evidence>
<evidence type="ECO:0000305" key="6"/>
<evidence type="ECO:0007744" key="7">
    <source>
        <dbReference type="PDB" id="8I7O"/>
    </source>
</evidence>
<evidence type="ECO:0007744" key="8">
    <source>
        <dbReference type="PDB" id="8I7R"/>
    </source>
</evidence>
<evidence type="ECO:0007744" key="9">
    <source>
        <dbReference type="PDB" id="8IYJ"/>
    </source>
</evidence>
<evidence type="ECO:0007744" key="10">
    <source>
        <dbReference type="PDB" id="8TO0"/>
    </source>
</evidence>
<accession>Q9D485</accession>
<accession>Q0VBF5</accession>
<accession>Q8CDV9</accession>
<organism>
    <name type="scientific">Mus musculus</name>
    <name type="common">Mouse</name>
    <dbReference type="NCBI Taxonomy" id="10090"/>
    <lineage>
        <taxon>Eukaryota</taxon>
        <taxon>Metazoa</taxon>
        <taxon>Chordata</taxon>
        <taxon>Craniata</taxon>
        <taxon>Vertebrata</taxon>
        <taxon>Euteleostomi</taxon>
        <taxon>Mammalia</taxon>
        <taxon>Eutheria</taxon>
        <taxon>Euarchontoglires</taxon>
        <taxon>Glires</taxon>
        <taxon>Rodentia</taxon>
        <taxon>Myomorpha</taxon>
        <taxon>Muroidea</taxon>
        <taxon>Muridae</taxon>
        <taxon>Murinae</taxon>
        <taxon>Mus</taxon>
        <taxon>Mus</taxon>
    </lineage>
</organism>
<feature type="chain" id="PRO_0000251704" description="EF-hand domain-containing family member C2">
    <location>
        <begin position="1"/>
        <end position="750"/>
    </location>
</feature>
<feature type="domain" description="DM10 1" evidence="2">
    <location>
        <begin position="75"/>
        <end position="182"/>
    </location>
</feature>
<feature type="domain" description="DM10 2" evidence="2">
    <location>
        <begin position="226"/>
        <end position="368"/>
    </location>
</feature>
<feature type="domain" description="DM10 3" evidence="2">
    <location>
        <begin position="430"/>
        <end position="537"/>
    </location>
</feature>
<feature type="domain" description="EF-hand">
    <location>
        <begin position="557"/>
        <end position="592"/>
    </location>
</feature>
<feature type="sequence conflict" description="In Ref. 1; BAB30393." evidence="6" ref="1">
    <original>P</original>
    <variation>S</variation>
    <location>
        <position position="381"/>
    </location>
</feature>
<feature type="sequence conflict" description="In Ref. 1; BAC26479." evidence="6" ref="1">
    <original>P</original>
    <variation>T</variation>
    <location>
        <position position="578"/>
    </location>
</feature>
<feature type="sequence conflict" description="In Ref. 1; BAC26479." evidence="6" ref="1">
    <original>L</original>
    <variation>V</variation>
    <location>
        <position position="674"/>
    </location>
</feature>
<keyword id="KW-0002">3D-structure</keyword>
<keyword id="KW-0966">Cell projection</keyword>
<keyword id="KW-0969">Cilium</keyword>
<keyword id="KW-0963">Cytoplasm</keyword>
<keyword id="KW-0206">Cytoskeleton</keyword>
<keyword id="KW-0282">Flagellum</keyword>
<keyword id="KW-1185">Reference proteome</keyword>
<keyword id="KW-0677">Repeat</keyword>
<reference key="1">
    <citation type="journal article" date="2005" name="Science">
        <title>The transcriptional landscape of the mammalian genome.</title>
        <authorList>
            <person name="Carninci P."/>
            <person name="Kasukawa T."/>
            <person name="Katayama S."/>
            <person name="Gough J."/>
            <person name="Frith M.C."/>
            <person name="Maeda N."/>
            <person name="Oyama R."/>
            <person name="Ravasi T."/>
            <person name="Lenhard B."/>
            <person name="Wells C."/>
            <person name="Kodzius R."/>
            <person name="Shimokawa K."/>
            <person name="Bajic V.B."/>
            <person name="Brenner S.E."/>
            <person name="Batalov S."/>
            <person name="Forrest A.R."/>
            <person name="Zavolan M."/>
            <person name="Davis M.J."/>
            <person name="Wilming L.G."/>
            <person name="Aidinis V."/>
            <person name="Allen J.E."/>
            <person name="Ambesi-Impiombato A."/>
            <person name="Apweiler R."/>
            <person name="Aturaliya R.N."/>
            <person name="Bailey T.L."/>
            <person name="Bansal M."/>
            <person name="Baxter L."/>
            <person name="Beisel K.W."/>
            <person name="Bersano T."/>
            <person name="Bono H."/>
            <person name="Chalk A.M."/>
            <person name="Chiu K.P."/>
            <person name="Choudhary V."/>
            <person name="Christoffels A."/>
            <person name="Clutterbuck D.R."/>
            <person name="Crowe M.L."/>
            <person name="Dalla E."/>
            <person name="Dalrymple B.P."/>
            <person name="de Bono B."/>
            <person name="Della Gatta G."/>
            <person name="di Bernardo D."/>
            <person name="Down T."/>
            <person name="Engstrom P."/>
            <person name="Fagiolini M."/>
            <person name="Faulkner G."/>
            <person name="Fletcher C.F."/>
            <person name="Fukushima T."/>
            <person name="Furuno M."/>
            <person name="Futaki S."/>
            <person name="Gariboldi M."/>
            <person name="Georgii-Hemming P."/>
            <person name="Gingeras T.R."/>
            <person name="Gojobori T."/>
            <person name="Green R.E."/>
            <person name="Gustincich S."/>
            <person name="Harbers M."/>
            <person name="Hayashi Y."/>
            <person name="Hensch T.K."/>
            <person name="Hirokawa N."/>
            <person name="Hill D."/>
            <person name="Huminiecki L."/>
            <person name="Iacono M."/>
            <person name="Ikeo K."/>
            <person name="Iwama A."/>
            <person name="Ishikawa T."/>
            <person name="Jakt M."/>
            <person name="Kanapin A."/>
            <person name="Katoh M."/>
            <person name="Kawasawa Y."/>
            <person name="Kelso J."/>
            <person name="Kitamura H."/>
            <person name="Kitano H."/>
            <person name="Kollias G."/>
            <person name="Krishnan S.P."/>
            <person name="Kruger A."/>
            <person name="Kummerfeld S.K."/>
            <person name="Kurochkin I.V."/>
            <person name="Lareau L.F."/>
            <person name="Lazarevic D."/>
            <person name="Lipovich L."/>
            <person name="Liu J."/>
            <person name="Liuni S."/>
            <person name="McWilliam S."/>
            <person name="Madan Babu M."/>
            <person name="Madera M."/>
            <person name="Marchionni L."/>
            <person name="Matsuda H."/>
            <person name="Matsuzawa S."/>
            <person name="Miki H."/>
            <person name="Mignone F."/>
            <person name="Miyake S."/>
            <person name="Morris K."/>
            <person name="Mottagui-Tabar S."/>
            <person name="Mulder N."/>
            <person name="Nakano N."/>
            <person name="Nakauchi H."/>
            <person name="Ng P."/>
            <person name="Nilsson R."/>
            <person name="Nishiguchi S."/>
            <person name="Nishikawa S."/>
            <person name="Nori F."/>
            <person name="Ohara O."/>
            <person name="Okazaki Y."/>
            <person name="Orlando V."/>
            <person name="Pang K.C."/>
            <person name="Pavan W.J."/>
            <person name="Pavesi G."/>
            <person name="Pesole G."/>
            <person name="Petrovsky N."/>
            <person name="Piazza S."/>
            <person name="Reed J."/>
            <person name="Reid J.F."/>
            <person name="Ring B.Z."/>
            <person name="Ringwald M."/>
            <person name="Rost B."/>
            <person name="Ruan Y."/>
            <person name="Salzberg S.L."/>
            <person name="Sandelin A."/>
            <person name="Schneider C."/>
            <person name="Schoenbach C."/>
            <person name="Sekiguchi K."/>
            <person name="Semple C.A."/>
            <person name="Seno S."/>
            <person name="Sessa L."/>
            <person name="Sheng Y."/>
            <person name="Shibata Y."/>
            <person name="Shimada H."/>
            <person name="Shimada K."/>
            <person name="Silva D."/>
            <person name="Sinclair B."/>
            <person name="Sperling S."/>
            <person name="Stupka E."/>
            <person name="Sugiura K."/>
            <person name="Sultana R."/>
            <person name="Takenaka Y."/>
            <person name="Taki K."/>
            <person name="Tammoja K."/>
            <person name="Tan S.L."/>
            <person name="Tang S."/>
            <person name="Taylor M.S."/>
            <person name="Tegner J."/>
            <person name="Teichmann S.A."/>
            <person name="Ueda H.R."/>
            <person name="van Nimwegen E."/>
            <person name="Verardo R."/>
            <person name="Wei C.L."/>
            <person name="Yagi K."/>
            <person name="Yamanishi H."/>
            <person name="Zabarovsky E."/>
            <person name="Zhu S."/>
            <person name="Zimmer A."/>
            <person name="Hide W."/>
            <person name="Bult C."/>
            <person name="Grimmond S.M."/>
            <person name="Teasdale R.D."/>
            <person name="Liu E.T."/>
            <person name="Brusic V."/>
            <person name="Quackenbush J."/>
            <person name="Wahlestedt C."/>
            <person name="Mattick J.S."/>
            <person name="Hume D.A."/>
            <person name="Kai C."/>
            <person name="Sasaki D."/>
            <person name="Tomaru Y."/>
            <person name="Fukuda S."/>
            <person name="Kanamori-Katayama M."/>
            <person name="Suzuki M."/>
            <person name="Aoki J."/>
            <person name="Arakawa T."/>
            <person name="Iida J."/>
            <person name="Imamura K."/>
            <person name="Itoh M."/>
            <person name="Kato T."/>
            <person name="Kawaji H."/>
            <person name="Kawagashira N."/>
            <person name="Kawashima T."/>
            <person name="Kojima M."/>
            <person name="Kondo S."/>
            <person name="Konno H."/>
            <person name="Nakano K."/>
            <person name="Ninomiya N."/>
            <person name="Nishio T."/>
            <person name="Okada M."/>
            <person name="Plessy C."/>
            <person name="Shibata K."/>
            <person name="Shiraki T."/>
            <person name="Suzuki S."/>
            <person name="Tagami M."/>
            <person name="Waki K."/>
            <person name="Watahiki A."/>
            <person name="Okamura-Oho Y."/>
            <person name="Suzuki H."/>
            <person name="Kawai J."/>
            <person name="Hayashizaki Y."/>
        </authorList>
    </citation>
    <scope>NUCLEOTIDE SEQUENCE [LARGE SCALE MRNA]</scope>
    <source>
        <strain>C57BL/6J</strain>
        <tissue>Testis</tissue>
    </source>
</reference>
<reference key="2">
    <citation type="journal article" date="2004" name="Genome Res.">
        <title>The status, quality, and expansion of the NIH full-length cDNA project: the Mammalian Gene Collection (MGC).</title>
        <authorList>
            <consortium name="The MGC Project Team"/>
        </authorList>
    </citation>
    <scope>NUCLEOTIDE SEQUENCE [LARGE SCALE MRNA]</scope>
    <source>
        <tissue>Brain</tissue>
    </source>
</reference>
<reference evidence="9" key="3">
    <citation type="journal article" date="2023" name="Cell">
        <title>Structures of sperm flagellar doublet microtubules expand the genetic spectrum of male infertility.</title>
        <authorList>
            <person name="Zhou L."/>
            <person name="Liu H."/>
            <person name="Liu S."/>
            <person name="Yang X."/>
            <person name="Dong Y."/>
            <person name="Pan Y."/>
            <person name="Xiao Z."/>
            <person name="Zheng B."/>
            <person name="Sun Y."/>
            <person name="Huang P."/>
            <person name="Zhang X."/>
            <person name="Hu J."/>
            <person name="Sun R."/>
            <person name="Feng S."/>
            <person name="Zhu Y."/>
            <person name="Liu M."/>
            <person name="Gui M."/>
            <person name="Wu J."/>
        </authorList>
    </citation>
    <scope>STRUCTURE BY ELECTRON MICROSCOPY (3.50 ANGSTROMS) OF SPERM FLAGELLAR DOUBLET MICROTUBULES</scope>
    <scope>FUNCTION</scope>
    <scope>SUBCELLULAR LOCATION</scope>
    <scope>SUBUNIT</scope>
</reference>
<reference evidence="10" key="4">
    <citation type="journal article" date="2023" name="Cell">
        <title>De novo protein identification in mammalian sperm using in situ cryoelectron tomography and AlphaFold2 docking.</title>
        <authorList>
            <person name="Chen Z."/>
            <person name="Shiozaki M."/>
            <person name="Haas K.M."/>
            <person name="Skinner W.M."/>
            <person name="Zhao S."/>
            <person name="Guo C."/>
            <person name="Polacco B.J."/>
            <person name="Yu Z."/>
            <person name="Krogan N.J."/>
            <person name="Lishko P.V."/>
            <person name="Kaake R.M."/>
            <person name="Vale R.D."/>
            <person name="Agard D.A."/>
        </authorList>
    </citation>
    <scope>STRUCTURE BY ELECTRON MICROSCOPY (7.70 ANGSTROMS) OF SPERM FLAGELLAR DOUBLET MICROTUBULES</scope>
    <scope>FUNCTION</scope>
    <scope>SUBCELLULAR LOCATION</scope>
    <scope>SUBUNIT</scope>
</reference>
<reference evidence="7 8" key="5">
    <citation type="journal article" date="2023" name="Cell Discov.">
        <title>In-cell structural insight into the stability of sperm microtubule doublet.</title>
        <authorList>
            <person name="Tai L."/>
            <person name="Yin G."/>
            <person name="Huang X."/>
            <person name="Sun F."/>
            <person name="Zhu Y."/>
        </authorList>
    </citation>
    <scope>STRUCTURE BY ELECTRON MICROSCOPY (4.50 ANGSTROMS)</scope>
    <scope>FUNCTION</scope>
    <scope>SUBUNIT</scope>
    <scope>SUBCELLULAR LOCATION</scope>
</reference>
<comment type="function">
    <text evidence="3 4 5">Microtubule inner protein (MIP) part of the dynein-decorated doublet microtubules (DMTs) in cilia axoneme, which is required for motile cilia beating.</text>
</comment>
<comment type="subunit">
    <text evidence="3 4 5">Microtubule inner protein component of sperm flagellar doublet microtubules.</text>
</comment>
<comment type="subcellular location">
    <subcellularLocation>
        <location evidence="1">Cytoplasm</location>
        <location evidence="1">Cytoskeleton</location>
        <location evidence="1">Cilium axoneme</location>
    </subcellularLocation>
    <subcellularLocation>
        <location evidence="3 4 5">Cytoplasm</location>
        <location evidence="3 4 5">Cytoskeleton</location>
        <location evidence="3 4 5">Flagellum axoneme</location>
    </subcellularLocation>
</comment>
<protein>
    <recommendedName>
        <fullName>EF-hand domain-containing family member C2</fullName>
    </recommendedName>
</protein>
<name>EFHC2_MOUSE</name>
<gene>
    <name type="primary">Efhc2</name>
</gene>
<sequence>MALPFLPGNSFNRNIGKERFHKSQHWGFCNNVRMLVSENKPGVGGDLLYGQKIKPKHSVFPKGDGTDAPSWVAFDKQVLSFDAYLEDEISDKRQEIFRIRYYKIYFYLEDDTIQVNEPEVINSGLPQGTSIRRQRIPYPPPNDDQFYTVYDFNINISVVFYGRTFKIYDCDPFTKNFLKKIGIKLNPPGQCPLDPYMKMRRETLEFVDPFRPYQSFDTLKRFIQYDGKVLRFFCLWDDSTSLFGDRREFVLHYFLCDGTVEIREVLPSNSGRDAMSSFLRRGKLPKYGPPGIYQPGQITDRAVLNVYGGLSEWRADGYLLDKYQLGKVEQDFYTDQDLSIGATINVWGRKVLLCDCDEFTKTYYRTKYGVDNFTPISCKPPHLPKIERKYPPYTGFGSEEDSFRSCVGLKPTPHRKNFKKFMELDSFGNISNILRYFGKLITHKCADVDRIFVIAFYLSDDTISVFEPIENNSGNAGGMFLKRSRVKKPGQEVFKSEFSEYIKAEELYIGATVNINGYLFILLNADEYTLNYMENNTDKFPYSNFELAIQKLKQEKSKSREITQVFAAADYNHTKVVPYNTFRDILMSITMGKLIDQELITIARHYRVPEIMDPDLAYLIARAHEKFKKNIFENFDMFIYNCVYEDREKKGVLPTKDIRRMCKSSRLPLDDDFLDCLLSRFEDKDHQINYEIFFSVLNWRMNPTPDLQAPPYLKEKCEDVWVGMPSPIPVKYVRYLDFLIDVYGLEDNML</sequence>
<dbReference type="EMBL" id="AK016714">
    <property type="protein sequence ID" value="BAB30393.1"/>
    <property type="molecule type" value="mRNA"/>
</dbReference>
<dbReference type="EMBL" id="AK029501">
    <property type="protein sequence ID" value="BAC26479.1"/>
    <property type="molecule type" value="mRNA"/>
</dbReference>
<dbReference type="EMBL" id="BC120659">
    <property type="protein sequence ID" value="AAI20660.1"/>
    <property type="molecule type" value="mRNA"/>
</dbReference>
<dbReference type="CCDS" id="CCDS40883.1"/>
<dbReference type="RefSeq" id="NP_083192.2">
    <property type="nucleotide sequence ID" value="NM_028916.5"/>
</dbReference>
<dbReference type="RefSeq" id="XP_006527768.1">
    <property type="nucleotide sequence ID" value="XM_006527705.3"/>
</dbReference>
<dbReference type="PDB" id="8I7O">
    <property type="method" value="EM"/>
    <property type="resolution" value="4.50 A"/>
    <property type="chains" value="G5=1-750"/>
</dbReference>
<dbReference type="PDB" id="8I7R">
    <property type="method" value="EM"/>
    <property type="resolution" value="6.50 A"/>
    <property type="chains" value="G4/G5/G6=1-750"/>
</dbReference>
<dbReference type="PDB" id="8IYJ">
    <property type="method" value="EM"/>
    <property type="resolution" value="3.50 A"/>
    <property type="chains" value="W/X/Y/Z=1-750"/>
</dbReference>
<dbReference type="PDB" id="8TO0">
    <property type="method" value="EM"/>
    <property type="resolution" value="7.70 A"/>
    <property type="chains" value="FS/Fg/Fo/Fv=1-750"/>
</dbReference>
<dbReference type="PDBsum" id="8I7O"/>
<dbReference type="PDBsum" id="8I7R"/>
<dbReference type="PDBsum" id="8IYJ"/>
<dbReference type="PDBsum" id="8TO0"/>
<dbReference type="EMDB" id="EMD-35229"/>
<dbReference type="EMDB" id="EMD-35230"/>
<dbReference type="EMDB" id="EMD-35823"/>
<dbReference type="EMDB" id="EMD-41431"/>
<dbReference type="SMR" id="Q9D485"/>
<dbReference type="BioGRID" id="216724">
    <property type="interactions" value="3"/>
</dbReference>
<dbReference type="FunCoup" id="Q9D485">
    <property type="interactions" value="91"/>
</dbReference>
<dbReference type="STRING" id="10090.ENSMUSP00000026014"/>
<dbReference type="iPTMnet" id="Q9D485"/>
<dbReference type="PhosphoSitePlus" id="Q9D485"/>
<dbReference type="PaxDb" id="10090-ENSMUSP00000026014"/>
<dbReference type="ProteomicsDB" id="277764"/>
<dbReference type="Antibodypedia" id="25126">
    <property type="antibodies" value="97 antibodies from 16 providers"/>
</dbReference>
<dbReference type="DNASU" id="74405"/>
<dbReference type="Ensembl" id="ENSMUST00000026014.8">
    <property type="protein sequence ID" value="ENSMUSP00000026014.8"/>
    <property type="gene ID" value="ENSMUSG00000025038.8"/>
</dbReference>
<dbReference type="GeneID" id="74405"/>
<dbReference type="KEGG" id="mmu:74405"/>
<dbReference type="UCSC" id="uc009sse.2">
    <property type="organism name" value="mouse"/>
</dbReference>
<dbReference type="AGR" id="MGI:1921655"/>
<dbReference type="CTD" id="80258"/>
<dbReference type="MGI" id="MGI:1921655">
    <property type="gene designation" value="Efhc2"/>
</dbReference>
<dbReference type="VEuPathDB" id="HostDB:ENSMUSG00000025038"/>
<dbReference type="eggNOG" id="KOG0043">
    <property type="taxonomic scope" value="Eukaryota"/>
</dbReference>
<dbReference type="GeneTree" id="ENSGT00530000063528"/>
<dbReference type="HOGENOM" id="CLU_018366_1_0_1"/>
<dbReference type="InParanoid" id="Q9D485"/>
<dbReference type="OMA" id="RFSCKQP"/>
<dbReference type="OrthoDB" id="10255210at2759"/>
<dbReference type="PhylomeDB" id="Q9D485"/>
<dbReference type="TreeFam" id="TF314504"/>
<dbReference type="BioGRID-ORCS" id="74405">
    <property type="hits" value="0 hits in 76 CRISPR screens"/>
</dbReference>
<dbReference type="PRO" id="PR:Q9D485"/>
<dbReference type="Proteomes" id="UP000000589">
    <property type="component" value="Chromosome X"/>
</dbReference>
<dbReference type="RNAct" id="Q9D485">
    <property type="molecule type" value="protein"/>
</dbReference>
<dbReference type="Bgee" id="ENSMUSG00000025038">
    <property type="expression patterns" value="Expressed in spermatid and 67 other cell types or tissues"/>
</dbReference>
<dbReference type="ExpressionAtlas" id="Q9D485">
    <property type="expression patterns" value="baseline and differential"/>
</dbReference>
<dbReference type="GO" id="GO:0160111">
    <property type="term" value="C:axonemal A tubule inner sheath"/>
    <property type="evidence" value="ECO:0000314"/>
    <property type="project" value="UniProtKB"/>
</dbReference>
<dbReference type="GO" id="GO:0005879">
    <property type="term" value="C:axonemal microtubule"/>
    <property type="evidence" value="ECO:0000250"/>
    <property type="project" value="UniProtKB"/>
</dbReference>
<dbReference type="GO" id="GO:0036064">
    <property type="term" value="C:ciliary basal body"/>
    <property type="evidence" value="ECO:0007669"/>
    <property type="project" value="Ensembl"/>
</dbReference>
<dbReference type="GO" id="GO:0036126">
    <property type="term" value="C:sperm flagellum"/>
    <property type="evidence" value="ECO:0000314"/>
    <property type="project" value="UniProtKB"/>
</dbReference>
<dbReference type="GO" id="GO:1990830">
    <property type="term" value="P:cellular response to leukemia inhibitory factor"/>
    <property type="evidence" value="ECO:0000270"/>
    <property type="project" value="MGI"/>
</dbReference>
<dbReference type="GO" id="GO:0030317">
    <property type="term" value="P:flagellated sperm motility"/>
    <property type="evidence" value="ECO:0000314"/>
    <property type="project" value="UniProtKB"/>
</dbReference>
<dbReference type="FunFam" id="2.30.29.170:FF:000002">
    <property type="entry name" value="EF-hand domain (C-terminal) containing 1"/>
    <property type="match status" value="1"/>
</dbReference>
<dbReference type="FunFam" id="2.30.29.170:FF:000003">
    <property type="entry name" value="EF-hand domain (C-terminal) containing 1"/>
    <property type="match status" value="1"/>
</dbReference>
<dbReference type="FunFam" id="2.30.29.170:FF:000001">
    <property type="entry name" value="EF-hand domain containing 1"/>
    <property type="match status" value="1"/>
</dbReference>
<dbReference type="FunFam" id="1.10.238.10:FF:000375">
    <property type="entry name" value="EF-hand domain-containing family member C2"/>
    <property type="match status" value="1"/>
</dbReference>
<dbReference type="Gene3D" id="2.30.29.170">
    <property type="match status" value="3"/>
</dbReference>
<dbReference type="Gene3D" id="1.10.238.10">
    <property type="entry name" value="EF-hand"/>
    <property type="match status" value="1"/>
</dbReference>
<dbReference type="InterPro" id="IPR006602">
    <property type="entry name" value="DM10_dom"/>
</dbReference>
<dbReference type="InterPro" id="IPR011992">
    <property type="entry name" value="EF-hand-dom_pair"/>
</dbReference>
<dbReference type="InterPro" id="IPR040193">
    <property type="entry name" value="EFHC1/EFHC2/EFHB"/>
</dbReference>
<dbReference type="PANTHER" id="PTHR12086">
    <property type="entry name" value="EF-HAND DOMAIN C-TERMINAL CONTAINING PROTEIN"/>
    <property type="match status" value="1"/>
</dbReference>
<dbReference type="PANTHER" id="PTHR12086:SF11">
    <property type="entry name" value="EF-HAND DOMAIN-CONTAINING FAMILY MEMBER C2"/>
    <property type="match status" value="1"/>
</dbReference>
<dbReference type="Pfam" id="PF06565">
    <property type="entry name" value="DM10_dom"/>
    <property type="match status" value="4"/>
</dbReference>
<dbReference type="SMART" id="SM00676">
    <property type="entry name" value="DM10"/>
    <property type="match status" value="3"/>
</dbReference>
<dbReference type="SUPFAM" id="SSF47473">
    <property type="entry name" value="EF-hand"/>
    <property type="match status" value="1"/>
</dbReference>
<dbReference type="PROSITE" id="PS51336">
    <property type="entry name" value="DM10"/>
    <property type="match status" value="3"/>
</dbReference>